<dbReference type="EMBL" id="AF254353">
    <property type="protein sequence ID" value="AAF67752.1"/>
    <property type="molecule type" value="Genomic_DNA"/>
</dbReference>
<dbReference type="EMBL" id="CU329671">
    <property type="protein sequence ID" value="CAB10088.1"/>
    <property type="molecule type" value="Genomic_DNA"/>
</dbReference>
<dbReference type="PIR" id="T40214">
    <property type="entry name" value="T40214"/>
</dbReference>
<dbReference type="RefSeq" id="NP_596573.1">
    <property type="nucleotide sequence ID" value="NM_001022494.2"/>
</dbReference>
<dbReference type="PDB" id="3JB9">
    <property type="method" value="EM"/>
    <property type="resolution" value="3.60 A"/>
    <property type="chains" value="R=41-290"/>
</dbReference>
<dbReference type="PDB" id="9ESH">
    <property type="method" value="EM"/>
    <property type="resolution" value="3.20 A"/>
    <property type="chains" value="R=1-674"/>
</dbReference>
<dbReference type="PDB" id="9ESI">
    <property type="method" value="EM"/>
    <property type="resolution" value="3.10 A"/>
    <property type="chains" value="R=1-674"/>
</dbReference>
<dbReference type="PDBsum" id="3JB9"/>
<dbReference type="PDBsum" id="9ESH"/>
<dbReference type="PDBsum" id="9ESI"/>
<dbReference type="EMDB" id="EMD-19941"/>
<dbReference type="EMDB" id="EMD-19942"/>
<dbReference type="SMR" id="P87312"/>
<dbReference type="BioGRID" id="276858">
    <property type="interactions" value="32"/>
</dbReference>
<dbReference type="FunCoup" id="P87312">
    <property type="interactions" value="851"/>
</dbReference>
<dbReference type="IntAct" id="P87312">
    <property type="interactions" value="8"/>
</dbReference>
<dbReference type="STRING" id="284812.P87312"/>
<dbReference type="PaxDb" id="4896-SPBC31F10.11c.1"/>
<dbReference type="EnsemblFungi" id="SPBC31F10.11c.1">
    <property type="protein sequence ID" value="SPBC31F10.11c.1:pep"/>
    <property type="gene ID" value="SPBC31F10.11c"/>
</dbReference>
<dbReference type="GeneID" id="2540328"/>
<dbReference type="KEGG" id="spo:2540328"/>
<dbReference type="PomBase" id="SPBC31F10.11c">
    <property type="gene designation" value="cwf4"/>
</dbReference>
<dbReference type="VEuPathDB" id="FungiDB:SPBC31F10.11c"/>
<dbReference type="eggNOG" id="KOG1915">
    <property type="taxonomic scope" value="Eukaryota"/>
</dbReference>
<dbReference type="HOGENOM" id="CLU_011554_1_0_1"/>
<dbReference type="InParanoid" id="P87312"/>
<dbReference type="OMA" id="HIKVWIS"/>
<dbReference type="PhylomeDB" id="P87312"/>
<dbReference type="Reactome" id="R-SPO-72163">
    <property type="pathway name" value="mRNA Splicing - Major Pathway"/>
</dbReference>
<dbReference type="PRO" id="PR:P87312"/>
<dbReference type="Proteomes" id="UP000002485">
    <property type="component" value="Chromosome II"/>
</dbReference>
<dbReference type="GO" id="GO:0005634">
    <property type="term" value="C:nucleus"/>
    <property type="evidence" value="ECO:0007005"/>
    <property type="project" value="PomBase"/>
</dbReference>
<dbReference type="GO" id="GO:0071014">
    <property type="term" value="C:post-mRNA release spliceosomal complex"/>
    <property type="evidence" value="ECO:0000314"/>
    <property type="project" value="PomBase"/>
</dbReference>
<dbReference type="GO" id="GO:0000974">
    <property type="term" value="C:Prp19 complex"/>
    <property type="evidence" value="ECO:0000314"/>
    <property type="project" value="PomBase"/>
</dbReference>
<dbReference type="GO" id="GO:0005681">
    <property type="term" value="C:spliceosomal complex"/>
    <property type="evidence" value="ECO:0000314"/>
    <property type="project" value="PomBase"/>
</dbReference>
<dbReference type="GO" id="GO:0071007">
    <property type="term" value="C:U2-type catalytic step 2 spliceosome"/>
    <property type="evidence" value="ECO:0000318"/>
    <property type="project" value="GO_Central"/>
</dbReference>
<dbReference type="GO" id="GO:0071004">
    <property type="term" value="C:U2-type prespliceosome"/>
    <property type="evidence" value="ECO:0000266"/>
    <property type="project" value="PomBase"/>
</dbReference>
<dbReference type="GO" id="GO:0045292">
    <property type="term" value="P:mRNA cis splicing, via spliceosome"/>
    <property type="evidence" value="ECO:0000269"/>
    <property type="project" value="PomBase"/>
</dbReference>
<dbReference type="GO" id="GO:0000398">
    <property type="term" value="P:mRNA splicing, via spliceosome"/>
    <property type="evidence" value="ECO:0000318"/>
    <property type="project" value="GO_Central"/>
</dbReference>
<dbReference type="GO" id="GO:0000245">
    <property type="term" value="P:spliceosomal complex assembly"/>
    <property type="evidence" value="ECO:0000318"/>
    <property type="project" value="GO_Central"/>
</dbReference>
<dbReference type="FunFam" id="1.25.40.10:FF:000048">
    <property type="entry name" value="Cell cycle control protein"/>
    <property type="match status" value="1"/>
</dbReference>
<dbReference type="FunFam" id="1.25.40.10:FF:000306">
    <property type="entry name" value="Cell cycle control protein cwf4"/>
    <property type="match status" value="1"/>
</dbReference>
<dbReference type="FunFam" id="1.25.40.10:FF:000796">
    <property type="entry name" value="Crooked neck pre-mRNA splicing factor 1"/>
    <property type="match status" value="1"/>
</dbReference>
<dbReference type="Gene3D" id="1.25.40.10">
    <property type="entry name" value="Tetratricopeptide repeat domain"/>
    <property type="match status" value="3"/>
</dbReference>
<dbReference type="InterPro" id="IPR003107">
    <property type="entry name" value="HAT"/>
</dbReference>
<dbReference type="InterPro" id="IPR055433">
    <property type="entry name" value="HAT_Syf1-like_N"/>
</dbReference>
<dbReference type="InterPro" id="IPR055430">
    <property type="entry name" value="HAT_Syf1_CNRKL1_C"/>
</dbReference>
<dbReference type="InterPro" id="IPR045075">
    <property type="entry name" value="Syf1-like"/>
</dbReference>
<dbReference type="InterPro" id="IPR011990">
    <property type="entry name" value="TPR-like_helical_dom_sf"/>
</dbReference>
<dbReference type="PANTHER" id="PTHR11246:SF3">
    <property type="entry name" value="CROOKED NECK-LIKE PROTEIN 1"/>
    <property type="match status" value="1"/>
</dbReference>
<dbReference type="PANTHER" id="PTHR11246">
    <property type="entry name" value="PRE-MRNA SPLICING FACTOR"/>
    <property type="match status" value="1"/>
</dbReference>
<dbReference type="Pfam" id="PF23231">
    <property type="entry name" value="HAT_Syf1_CNRKL1_C"/>
    <property type="match status" value="2"/>
</dbReference>
<dbReference type="Pfam" id="PF23233">
    <property type="entry name" value="HAT_Syf1_CNRKL1_N"/>
    <property type="match status" value="1"/>
</dbReference>
<dbReference type="SMART" id="SM00386">
    <property type="entry name" value="HAT"/>
    <property type="match status" value="14"/>
</dbReference>
<dbReference type="SUPFAM" id="SSF48452">
    <property type="entry name" value="TPR-like"/>
    <property type="match status" value="2"/>
</dbReference>
<sequence>MTSEAPRVKNKNPAPIQISAEQLLREAVERQDVAFVPPKINITDLEELQEFQGRKRKEFEDAIRRNRLAMGHWMRYGQWELDQKEFARARSVFERALDVDSTYIPLWLKYIECEMKNRNINHARNLFDRAVTQLPRVDKLWYKYVYMEEMLGNITGCRQVFERWLKWEPDENCWMSYIRMERRYHENERARGIYERFVVVHPEVTNWLRWARFEEECGNAANVRQVYLAAIDALGQEFLNERFFIAFAKFEIRQKEYERARTIFKYAIDFMPRSKSMELYKEYTHFEKQFGDHLGVESTVLDKRRLQYEKLLKDSPYDYDTWLDLLKLEESAGDINTIRETYEKAIAKVPEVVEKNAWRRYVYIWLNYCLFEEIDVKDVDRARKVYQEALKLIPHKKFTFAKLWLMYAMFELRQRKIDVARKTLGRALGMCPKPKLFRGYIEFEDAIKQFDRCRILYEKWILYDPEACAPWLGYAALETKLGDSDRARALYNLAVNQPILETPELVWKAYIDFEFEEMEYGKARSIYQQLLRTAPHVKVWISFANFEIAHLEDDDEEPPNEEVASPTAVVRARNVFENALAHLRQQGLKEERVVLLEAWKQFEAMHGTEDTRKHVSSLMPQVVKKRRRLEDGSFEEYLDYLFPDTATDQGDKMRKMLELSRKWKEEMAKKKLEA</sequence>
<gene>
    <name type="primary">cwf4</name>
    <name type="synonym">syf3</name>
    <name type="ORF">SPBC31F10.11c</name>
</gene>
<keyword id="KW-0002">3D-structure</keyword>
<keyword id="KW-0903">Direct protein sequencing</keyword>
<keyword id="KW-0507">mRNA processing</keyword>
<keyword id="KW-0508">mRNA splicing</keyword>
<keyword id="KW-0539">Nucleus</keyword>
<keyword id="KW-1185">Reference proteome</keyword>
<keyword id="KW-0677">Repeat</keyword>
<keyword id="KW-0747">Spliceosome</keyword>
<accession>P87312</accession>
<feature type="chain" id="PRO_0000205750" description="Pre-mRNA-splicing factor cwf4">
    <location>
        <begin position="1"/>
        <end position="674"/>
    </location>
</feature>
<feature type="repeat" description="HAT 1">
    <location>
        <begin position="50"/>
        <end position="82"/>
    </location>
</feature>
<feature type="repeat" description="HAT 2">
    <location>
        <begin position="84"/>
        <end position="116"/>
    </location>
</feature>
<feature type="repeat" description="HAT 3">
    <location>
        <begin position="118"/>
        <end position="150"/>
    </location>
</feature>
<feature type="repeat" description="HAT 4">
    <location>
        <begin position="152"/>
        <end position="183"/>
    </location>
</feature>
<feature type="repeat" description="HAT 5">
    <location>
        <begin position="185"/>
        <end position="216"/>
    </location>
</feature>
<feature type="repeat" description="HAT 6">
    <location>
        <begin position="218"/>
        <end position="253"/>
    </location>
</feature>
<feature type="repeat" description="HAT 7">
    <location>
        <begin position="255"/>
        <end position="289"/>
    </location>
</feature>
<feature type="repeat" description="HAT 8">
    <location>
        <begin position="299"/>
        <end position="331"/>
    </location>
</feature>
<feature type="repeat" description="HAT 9">
    <location>
        <begin position="333"/>
        <end position="367"/>
    </location>
</feature>
<feature type="repeat" description="HAT 10">
    <location>
        <begin position="377"/>
        <end position="413"/>
    </location>
</feature>
<feature type="repeat" description="HAT 11">
    <location>
        <begin position="415"/>
        <end position="446"/>
    </location>
</feature>
<feature type="repeat" description="HAT 12">
    <location>
        <begin position="448"/>
        <end position="480"/>
    </location>
</feature>
<feature type="repeat" description="HAT 13">
    <location>
        <begin position="482"/>
        <end position="516"/>
    </location>
</feature>
<feature type="repeat" description="HAT 14">
    <location>
        <begin position="518"/>
        <end position="549"/>
    </location>
</feature>
<feature type="repeat" description="HAT 15">
    <location>
        <begin position="567"/>
        <end position="608"/>
    </location>
</feature>
<feature type="repeat" description="HAT 16">
    <location>
        <begin position="610"/>
        <end position="643"/>
    </location>
</feature>
<feature type="helix" evidence="5">
    <location>
        <begin position="20"/>
        <end position="28"/>
    </location>
</feature>
<feature type="helix" evidence="5">
    <location>
        <begin position="45"/>
        <end position="65"/>
    </location>
</feature>
<feature type="helix" evidence="5">
    <location>
        <begin position="70"/>
        <end position="81"/>
    </location>
</feature>
<feature type="helix" evidence="5">
    <location>
        <begin position="88"/>
        <end position="99"/>
    </location>
</feature>
<feature type="helix" evidence="5">
    <location>
        <begin position="104"/>
        <end position="116"/>
    </location>
</feature>
<feature type="helix" evidence="5">
    <location>
        <begin position="120"/>
        <end position="133"/>
    </location>
</feature>
<feature type="helix" evidence="5">
    <location>
        <begin position="138"/>
        <end position="151"/>
    </location>
</feature>
<feature type="helix" evidence="5">
    <location>
        <begin position="154"/>
        <end position="165"/>
    </location>
</feature>
<feature type="helix" evidence="5">
    <location>
        <begin position="171"/>
        <end position="182"/>
    </location>
</feature>
<feature type="helix" evidence="5">
    <location>
        <begin position="187"/>
        <end position="200"/>
    </location>
</feature>
<feature type="helix" evidence="5">
    <location>
        <begin position="204"/>
        <end position="217"/>
    </location>
</feature>
<feature type="helix" evidence="5">
    <location>
        <begin position="221"/>
        <end position="238"/>
    </location>
</feature>
<feature type="helix" evidence="5">
    <location>
        <begin position="241"/>
        <end position="253"/>
    </location>
</feature>
<feature type="helix" evidence="5">
    <location>
        <begin position="257"/>
        <end position="270"/>
    </location>
</feature>
<feature type="helix" evidence="4">
    <location>
        <begin position="273"/>
        <end position="275"/>
    </location>
</feature>
<feature type="helix" evidence="5">
    <location>
        <begin position="277"/>
        <end position="289"/>
    </location>
</feature>
<feature type="strand" evidence="4">
    <location>
        <begin position="293"/>
        <end position="296"/>
    </location>
</feature>
<feature type="helix" evidence="5">
    <location>
        <begin position="297"/>
        <end position="314"/>
    </location>
</feature>
<feature type="helix" evidence="5">
    <location>
        <begin position="315"/>
        <end position="317"/>
    </location>
</feature>
<feature type="helix" evidence="5">
    <location>
        <begin position="320"/>
        <end position="322"/>
    </location>
</feature>
<feature type="helix" evidence="5">
    <location>
        <begin position="325"/>
        <end position="333"/>
    </location>
</feature>
<feature type="helix" evidence="5">
    <location>
        <begin position="339"/>
        <end position="348"/>
    </location>
</feature>
<feature type="helix" evidence="5">
    <location>
        <begin position="349"/>
        <end position="351"/>
    </location>
</feature>
<feature type="helix" evidence="5">
    <location>
        <begin position="357"/>
        <end position="371"/>
    </location>
</feature>
<feature type="helix" evidence="5">
    <location>
        <begin position="384"/>
        <end position="390"/>
    </location>
</feature>
<feature type="helix" evidence="5">
    <location>
        <begin position="401"/>
        <end position="414"/>
    </location>
</feature>
<feature type="helix" evidence="5">
    <location>
        <begin position="417"/>
        <end position="430"/>
    </location>
</feature>
<feature type="helix" evidence="5">
    <location>
        <begin position="434"/>
        <end position="447"/>
    </location>
</feature>
<feature type="helix" evidence="5">
    <location>
        <begin position="450"/>
        <end position="463"/>
    </location>
</feature>
<feature type="helix" evidence="5">
    <location>
        <begin position="468"/>
        <end position="480"/>
    </location>
</feature>
<feature type="helix" evidence="5">
    <location>
        <begin position="484"/>
        <end position="496"/>
    </location>
</feature>
<feature type="helix" evidence="5">
    <location>
        <begin position="503"/>
        <end position="513"/>
    </location>
</feature>
<feature type="turn" evidence="5">
    <location>
        <begin position="514"/>
        <end position="517"/>
    </location>
</feature>
<feature type="helix" evidence="5">
    <location>
        <begin position="520"/>
        <end position="533"/>
    </location>
</feature>
<feature type="helix" evidence="5">
    <location>
        <begin position="537"/>
        <end position="549"/>
    </location>
</feature>
<feature type="helix" evidence="5">
    <location>
        <begin position="566"/>
        <end position="586"/>
    </location>
</feature>
<feature type="helix" evidence="5">
    <location>
        <begin position="589"/>
        <end position="606"/>
    </location>
</feature>
<feature type="helix" evidence="5">
    <location>
        <begin position="609"/>
        <end position="617"/>
    </location>
</feature>
<evidence type="ECO:0000250" key="1"/>
<evidence type="ECO:0000269" key="2">
    <source>
    </source>
</evidence>
<evidence type="ECO:0000305" key="3"/>
<evidence type="ECO:0007829" key="4">
    <source>
        <dbReference type="PDB" id="9ESH"/>
    </source>
</evidence>
<evidence type="ECO:0007829" key="5">
    <source>
        <dbReference type="PDB" id="9ESI"/>
    </source>
</evidence>
<reference key="1">
    <citation type="journal article" date="1999" name="Mol. Cell. Biol.">
        <title>Myb-related fission yeast cdc5p is a component of a 40S snRNP-containing complex and is essential for pre-mRNA splicing.</title>
        <authorList>
            <person name="McDonald W.H."/>
            <person name="Ohi R."/>
            <person name="Smelkova N."/>
            <person name="Frendewey D."/>
            <person name="Gould K.L."/>
        </authorList>
    </citation>
    <scope>NUCLEOTIDE SEQUENCE [GENOMIC DNA]</scope>
    <scope>PROTEIN SEQUENCE OF 12-25; 40-54 AND 225-242</scope>
</reference>
<reference key="2">
    <citation type="journal article" date="2002" name="Nature">
        <title>The genome sequence of Schizosaccharomyces pombe.</title>
        <authorList>
            <person name="Wood V."/>
            <person name="Gwilliam R."/>
            <person name="Rajandream M.A."/>
            <person name="Lyne M.H."/>
            <person name="Lyne R."/>
            <person name="Stewart A."/>
            <person name="Sgouros J.G."/>
            <person name="Peat N."/>
            <person name="Hayles J."/>
            <person name="Baker S.G."/>
            <person name="Basham D."/>
            <person name="Bowman S."/>
            <person name="Brooks K."/>
            <person name="Brown D."/>
            <person name="Brown S."/>
            <person name="Chillingworth T."/>
            <person name="Churcher C.M."/>
            <person name="Collins M."/>
            <person name="Connor R."/>
            <person name="Cronin A."/>
            <person name="Davis P."/>
            <person name="Feltwell T."/>
            <person name="Fraser A."/>
            <person name="Gentles S."/>
            <person name="Goble A."/>
            <person name="Hamlin N."/>
            <person name="Harris D.E."/>
            <person name="Hidalgo J."/>
            <person name="Hodgson G."/>
            <person name="Holroyd S."/>
            <person name="Hornsby T."/>
            <person name="Howarth S."/>
            <person name="Huckle E.J."/>
            <person name="Hunt S."/>
            <person name="Jagels K."/>
            <person name="James K.D."/>
            <person name="Jones L."/>
            <person name="Jones M."/>
            <person name="Leather S."/>
            <person name="McDonald S."/>
            <person name="McLean J."/>
            <person name="Mooney P."/>
            <person name="Moule S."/>
            <person name="Mungall K.L."/>
            <person name="Murphy L.D."/>
            <person name="Niblett D."/>
            <person name="Odell C."/>
            <person name="Oliver K."/>
            <person name="O'Neil S."/>
            <person name="Pearson D."/>
            <person name="Quail M.A."/>
            <person name="Rabbinowitsch E."/>
            <person name="Rutherford K.M."/>
            <person name="Rutter S."/>
            <person name="Saunders D."/>
            <person name="Seeger K."/>
            <person name="Sharp S."/>
            <person name="Skelton J."/>
            <person name="Simmonds M.N."/>
            <person name="Squares R."/>
            <person name="Squares S."/>
            <person name="Stevens K."/>
            <person name="Taylor K."/>
            <person name="Taylor R.G."/>
            <person name="Tivey A."/>
            <person name="Walsh S.V."/>
            <person name="Warren T."/>
            <person name="Whitehead S."/>
            <person name="Woodward J.R."/>
            <person name="Volckaert G."/>
            <person name="Aert R."/>
            <person name="Robben J."/>
            <person name="Grymonprez B."/>
            <person name="Weltjens I."/>
            <person name="Vanstreels E."/>
            <person name="Rieger M."/>
            <person name="Schaefer M."/>
            <person name="Mueller-Auer S."/>
            <person name="Gabel C."/>
            <person name="Fuchs M."/>
            <person name="Duesterhoeft A."/>
            <person name="Fritzc C."/>
            <person name="Holzer E."/>
            <person name="Moestl D."/>
            <person name="Hilbert H."/>
            <person name="Borzym K."/>
            <person name="Langer I."/>
            <person name="Beck A."/>
            <person name="Lehrach H."/>
            <person name="Reinhardt R."/>
            <person name="Pohl T.M."/>
            <person name="Eger P."/>
            <person name="Zimmermann W."/>
            <person name="Wedler H."/>
            <person name="Wambutt R."/>
            <person name="Purnelle B."/>
            <person name="Goffeau A."/>
            <person name="Cadieu E."/>
            <person name="Dreano S."/>
            <person name="Gloux S."/>
            <person name="Lelaure V."/>
            <person name="Mottier S."/>
            <person name="Galibert F."/>
            <person name="Aves S.J."/>
            <person name="Xiang Z."/>
            <person name="Hunt C."/>
            <person name="Moore K."/>
            <person name="Hurst S.M."/>
            <person name="Lucas M."/>
            <person name="Rochet M."/>
            <person name="Gaillardin C."/>
            <person name="Tallada V.A."/>
            <person name="Garzon A."/>
            <person name="Thode G."/>
            <person name="Daga R.R."/>
            <person name="Cruzado L."/>
            <person name="Jimenez J."/>
            <person name="Sanchez M."/>
            <person name="del Rey F."/>
            <person name="Benito J."/>
            <person name="Dominguez A."/>
            <person name="Revuelta J.L."/>
            <person name="Moreno S."/>
            <person name="Armstrong J."/>
            <person name="Forsburg S.L."/>
            <person name="Cerutti L."/>
            <person name="Lowe T."/>
            <person name="McCombie W.R."/>
            <person name="Paulsen I."/>
            <person name="Potashkin J."/>
            <person name="Shpakovski G.V."/>
            <person name="Ussery D."/>
            <person name="Barrell B.G."/>
            <person name="Nurse P."/>
        </authorList>
    </citation>
    <scope>NUCLEOTIDE SEQUENCE [LARGE SCALE GENOMIC DNA]</scope>
    <source>
        <strain>972 / ATCC 24843</strain>
    </source>
</reference>
<reference key="3">
    <citation type="journal article" date="2002" name="Mol. Cell. Biol.">
        <title>Proteomics analysis reveals stable multiprotein complexes in both fission and budding yeasts containing Myb-related Cdc5p/Cef1p, novel pre-mRNA splicing factors, and snRNAs.</title>
        <authorList>
            <person name="Ohi M.D."/>
            <person name="Link A.J."/>
            <person name="Ren L."/>
            <person name="Jennings J.L."/>
            <person name="McDonald W.H."/>
            <person name="Gould K.L."/>
        </authorList>
    </citation>
    <scope>IDENTIFICATION IN THE CWF COMPLEX</scope>
    <scope>IDENTIFICATION BY MASS SPECTROMETRY</scope>
</reference>
<proteinExistence type="evidence at protein level"/>
<comment type="function">
    <text evidence="1">Involved in pre-mRNA splicing and cell cycle progression. Required for the spliceosome assembly and initiation of the DNA replication (By similarity).</text>
</comment>
<comment type="subunit">
    <text evidence="2">Belongs to the 40S cdc5-associated complex (or cwf complex), a spliceosome sub-complex reminiscent of a late-stage spliceosome composed of the U2, U5 and U6 snRNAs and at least brr2, cdc5, cwf2/prp3, cwf3/syf1, cwf4/syf3, cwf5/ecm2, spp42/cwf6, cwf7/spf27, cwf8, cwf9, cwf10, cwf11, cwf12, prp45/cwf13, cwf14, cwf15, cwf16, cwf17, cwf18, cwf19, cwf20, cwf21, cwf22, cwf23, cwf24, cwf25, cwf26, cyp7/cwf27, cwf28, cwf29/ist3, lea1, msl1, prp5/cwf1, prp10, prp12/sap130, prp17, prp22, sap61, sap62, sap114, sap145, slu7, smb1, smd1, smd3, smf1, smg1 and syf2.</text>
</comment>
<comment type="interaction">
    <interactant intactId="EBI-538818">
        <id>P87312</id>
    </interactant>
    <interactant intactId="EBI-538771">
        <id>P39964</id>
        <label>cdc5</label>
    </interactant>
    <organismsDiffer>false</organismsDiffer>
    <experiments>7</experiments>
</comment>
<comment type="subcellular location">
    <subcellularLocation>
        <location evidence="1">Nucleus</location>
    </subcellularLocation>
</comment>
<comment type="similarity">
    <text evidence="3">Belongs to the crooked-neck family.</text>
</comment>
<organism>
    <name type="scientific">Schizosaccharomyces pombe (strain 972 / ATCC 24843)</name>
    <name type="common">Fission yeast</name>
    <dbReference type="NCBI Taxonomy" id="284812"/>
    <lineage>
        <taxon>Eukaryota</taxon>
        <taxon>Fungi</taxon>
        <taxon>Dikarya</taxon>
        <taxon>Ascomycota</taxon>
        <taxon>Taphrinomycotina</taxon>
        <taxon>Schizosaccharomycetes</taxon>
        <taxon>Schizosaccharomycetales</taxon>
        <taxon>Schizosaccharomycetaceae</taxon>
        <taxon>Schizosaccharomyces</taxon>
    </lineage>
</organism>
<name>CLF1_SCHPO</name>
<protein>
    <recommendedName>
        <fullName>Pre-mRNA-splicing factor cwf4</fullName>
    </recommendedName>
    <alternativeName>
        <fullName>Complexed with cdc5 protein 4</fullName>
    </alternativeName>
</protein>